<dbReference type="EC" id="4.2.1.1"/>
<dbReference type="EMBL" id="FO081593">
    <property type="protein sequence ID" value="CCD72692.1"/>
    <property type="molecule type" value="Genomic_DNA"/>
</dbReference>
<dbReference type="PIR" id="T16575">
    <property type="entry name" value="T16575"/>
</dbReference>
<dbReference type="RefSeq" id="NP_001370788.1">
    <property type="nucleotide sequence ID" value="NM_001383694.2"/>
</dbReference>
<dbReference type="RefSeq" id="NP_510674.1">
    <property type="nucleotide sequence ID" value="NM_078273.6"/>
</dbReference>
<dbReference type="SMR" id="Q27504"/>
<dbReference type="BioGRID" id="46597">
    <property type="interactions" value="2"/>
</dbReference>
<dbReference type="FunCoup" id="Q27504">
    <property type="interactions" value="269"/>
</dbReference>
<dbReference type="IntAct" id="Q27504">
    <property type="interactions" value="1"/>
</dbReference>
<dbReference type="MINT" id="Q27504"/>
<dbReference type="STRING" id="6239.K05G3.3.1"/>
<dbReference type="PaxDb" id="6239-K05G3.3"/>
<dbReference type="PeptideAtlas" id="Q27504"/>
<dbReference type="EnsemblMetazoa" id="K05G3.3.1">
    <property type="protein sequence ID" value="K05G3.3.1"/>
    <property type="gene ID" value="WBGene00000281"/>
</dbReference>
<dbReference type="GeneID" id="181713"/>
<dbReference type="UCSC" id="K05G3.3">
    <property type="organism name" value="c. elegans"/>
</dbReference>
<dbReference type="AGR" id="WB:WBGene00000281"/>
<dbReference type="WormBase" id="K05G3.3">
    <property type="protein sequence ID" value="CE04755"/>
    <property type="gene ID" value="WBGene00000281"/>
    <property type="gene designation" value="cah-3"/>
</dbReference>
<dbReference type="eggNOG" id="KOG0382">
    <property type="taxonomic scope" value="Eukaryota"/>
</dbReference>
<dbReference type="HOGENOM" id="CLU_039326_2_2_1"/>
<dbReference type="InParanoid" id="Q27504"/>
<dbReference type="OMA" id="TWTIFTE"/>
<dbReference type="OrthoDB" id="429145at2759"/>
<dbReference type="PhylomeDB" id="Q27504"/>
<dbReference type="Reactome" id="R-CEL-1237044">
    <property type="pathway name" value="Erythrocytes take up carbon dioxide and release oxygen"/>
</dbReference>
<dbReference type="Reactome" id="R-CEL-1247673">
    <property type="pathway name" value="Erythrocytes take up oxygen and release carbon dioxide"/>
</dbReference>
<dbReference type="Reactome" id="R-CEL-1475029">
    <property type="pathway name" value="Reversible hydration of carbon dioxide"/>
</dbReference>
<dbReference type="PRO" id="PR:Q27504"/>
<dbReference type="Proteomes" id="UP000001940">
    <property type="component" value="Chromosome X"/>
</dbReference>
<dbReference type="Bgee" id="WBGene00000281">
    <property type="expression patterns" value="Expressed in larva and 6 other cell types or tissues"/>
</dbReference>
<dbReference type="GO" id="GO:0005737">
    <property type="term" value="C:cytoplasm"/>
    <property type="evidence" value="ECO:0000318"/>
    <property type="project" value="GO_Central"/>
</dbReference>
<dbReference type="GO" id="GO:0004089">
    <property type="term" value="F:carbonate dehydratase activity"/>
    <property type="evidence" value="ECO:0000318"/>
    <property type="project" value="GO_Central"/>
</dbReference>
<dbReference type="GO" id="GO:0008270">
    <property type="term" value="F:zinc ion binding"/>
    <property type="evidence" value="ECO:0007669"/>
    <property type="project" value="InterPro"/>
</dbReference>
<dbReference type="CDD" id="cd00326">
    <property type="entry name" value="alpha_CA"/>
    <property type="match status" value="1"/>
</dbReference>
<dbReference type="Gene3D" id="3.10.200.10">
    <property type="entry name" value="Alpha carbonic anhydrase"/>
    <property type="match status" value="1"/>
</dbReference>
<dbReference type="InterPro" id="IPR001148">
    <property type="entry name" value="CA_dom"/>
</dbReference>
<dbReference type="InterPro" id="IPR036398">
    <property type="entry name" value="CA_dom_sf"/>
</dbReference>
<dbReference type="InterPro" id="IPR023561">
    <property type="entry name" value="Carbonic_anhydrase_a-class"/>
</dbReference>
<dbReference type="InterPro" id="IPR018338">
    <property type="entry name" value="Carbonic_anhydrase_a-class_CS"/>
</dbReference>
<dbReference type="PANTHER" id="PTHR18952">
    <property type="entry name" value="CARBONIC ANHYDRASE"/>
    <property type="match status" value="1"/>
</dbReference>
<dbReference type="PANTHER" id="PTHR18952:SF141">
    <property type="entry name" value="CARBONIC ANHYDRASE"/>
    <property type="match status" value="1"/>
</dbReference>
<dbReference type="Pfam" id="PF00194">
    <property type="entry name" value="Carb_anhydrase"/>
    <property type="match status" value="1"/>
</dbReference>
<dbReference type="SMART" id="SM01057">
    <property type="entry name" value="Carb_anhydrase"/>
    <property type="match status" value="1"/>
</dbReference>
<dbReference type="SUPFAM" id="SSF51069">
    <property type="entry name" value="Carbonic anhydrase"/>
    <property type="match status" value="1"/>
</dbReference>
<dbReference type="PROSITE" id="PS00162">
    <property type="entry name" value="ALPHA_CA_1"/>
    <property type="match status" value="1"/>
</dbReference>
<dbReference type="PROSITE" id="PS51144">
    <property type="entry name" value="ALPHA_CA_2"/>
    <property type="match status" value="1"/>
</dbReference>
<protein>
    <recommendedName>
        <fullName>Putative carbonic anhydrase 3</fullName>
        <ecNumber>4.2.1.1</ecNumber>
    </recommendedName>
    <alternativeName>
        <fullName>Carbonate dehydratase 3</fullName>
    </alternativeName>
</protein>
<proteinExistence type="inferred from homology"/>
<sequence>MTGHWSYCDDDECGPNRWPTGQHQSPINIDLGEVERKDTHDGIKFVNYDHPIQGDIVNNGHSVQMTPELRSEHPEIYGGGLDQVYRLVQYHFHWGENDNEGSEHTLGGLRYPAELHLVHQGVEDPGKLAVVGVFLQLGKEGKALSNEERVLGKLCNPETVTRVENVRLSEKLPANKRSFWRYEGSLTTPPCSEIVTWTIFTEPVTVTHDQLELFRQVQDIEKRPIKKNYRPTQNLNDRKIVHIVAN</sequence>
<keyword id="KW-0456">Lyase</keyword>
<keyword id="KW-0479">Metal-binding</keyword>
<keyword id="KW-1185">Reference proteome</keyword>
<keyword id="KW-0862">Zinc</keyword>
<gene>
    <name type="primary">cah-3</name>
    <name type="ORF">K05G3.3</name>
</gene>
<name>CAH3_CAEEL</name>
<organism>
    <name type="scientific">Caenorhabditis elegans</name>
    <dbReference type="NCBI Taxonomy" id="6239"/>
    <lineage>
        <taxon>Eukaryota</taxon>
        <taxon>Metazoa</taxon>
        <taxon>Ecdysozoa</taxon>
        <taxon>Nematoda</taxon>
        <taxon>Chromadorea</taxon>
        <taxon>Rhabditida</taxon>
        <taxon>Rhabditina</taxon>
        <taxon>Rhabditomorpha</taxon>
        <taxon>Rhabditoidea</taxon>
        <taxon>Rhabditidae</taxon>
        <taxon>Peloderinae</taxon>
        <taxon>Caenorhabditis</taxon>
    </lineage>
</organism>
<evidence type="ECO:0000250" key="1">
    <source>
        <dbReference type="UniProtKB" id="P00918"/>
    </source>
</evidence>
<evidence type="ECO:0000250" key="2">
    <source>
        <dbReference type="UniProtKB" id="P07451"/>
    </source>
</evidence>
<evidence type="ECO:0000255" key="3">
    <source>
        <dbReference type="PROSITE-ProRule" id="PRU01134"/>
    </source>
</evidence>
<evidence type="ECO:0000305" key="4"/>
<feature type="chain" id="PRO_0000077444" description="Putative carbonic anhydrase 3">
    <location>
        <begin position="1"/>
        <end position="246"/>
    </location>
</feature>
<feature type="domain" description="Alpha-carbonic anhydrase" evidence="3">
    <location>
        <begin position="3"/>
        <end position="244"/>
    </location>
</feature>
<feature type="active site" description="Proton acceptor" evidence="1">
    <location>
        <position position="61"/>
    </location>
</feature>
<feature type="binding site" evidence="1">
    <location>
        <position position="91"/>
    </location>
    <ligand>
        <name>Zn(2+)</name>
        <dbReference type="ChEBI" id="CHEBI:29105"/>
        <note>catalytic</note>
    </ligand>
</feature>
<feature type="binding site" evidence="1">
    <location>
        <position position="93"/>
    </location>
    <ligand>
        <name>Zn(2+)</name>
        <dbReference type="ChEBI" id="CHEBI:29105"/>
        <note>catalytic</note>
    </ligand>
</feature>
<feature type="binding site" evidence="1">
    <location>
        <position position="116"/>
    </location>
    <ligand>
        <name>Zn(2+)</name>
        <dbReference type="ChEBI" id="CHEBI:29105"/>
        <note>catalytic</note>
    </ligand>
</feature>
<feature type="binding site" evidence="1">
    <location>
        <begin position="187"/>
        <end position="188"/>
    </location>
    <ligand>
        <name>substrate</name>
    </ligand>
</feature>
<accession>Q27504</accession>
<comment type="function">
    <text>Reversible hydration of carbon dioxide.</text>
</comment>
<comment type="catalytic activity">
    <reaction>
        <text>hydrogencarbonate + H(+) = CO2 + H2O</text>
        <dbReference type="Rhea" id="RHEA:10748"/>
        <dbReference type="ChEBI" id="CHEBI:15377"/>
        <dbReference type="ChEBI" id="CHEBI:15378"/>
        <dbReference type="ChEBI" id="CHEBI:16526"/>
        <dbReference type="ChEBI" id="CHEBI:17544"/>
        <dbReference type="EC" id="4.2.1.1"/>
    </reaction>
</comment>
<comment type="cofactor">
    <cofactor evidence="2">
        <name>Zn(2+)</name>
        <dbReference type="ChEBI" id="CHEBI:29105"/>
    </cofactor>
</comment>
<comment type="similarity">
    <text evidence="4">Belongs to the alpha-carbonic anhydrase family.</text>
</comment>
<reference key="1">
    <citation type="journal article" date="1998" name="Science">
        <title>Genome sequence of the nematode C. elegans: a platform for investigating biology.</title>
        <authorList>
            <consortium name="The C. elegans sequencing consortium"/>
        </authorList>
    </citation>
    <scope>NUCLEOTIDE SEQUENCE [LARGE SCALE GENOMIC DNA]</scope>
    <source>
        <strain>Bristol N2</strain>
    </source>
</reference>